<sequence length="200" mass="21313">MRIILLGPPGAGKGTQSERIVERYRVPQLSTGDMLRAAVAAETPVGLEAKAIMESGGLVSDAIVVGIVADRIEEADAKNGFILDGFPRTVEQAKALDAMLAQKGIALDAVVEFVVDETALVGRIAKRAEETAARGQPVRKDDTPEVFKTRLDAYRKQTAPLSDYYAGTGLLRKIDGMKPIDVVTGDVTALLDGFRETASS</sequence>
<comment type="function">
    <text evidence="1">Catalyzes the reversible transfer of the terminal phosphate group between ATP and AMP. Plays an important role in cellular energy homeostasis and in adenine nucleotide metabolism.</text>
</comment>
<comment type="catalytic activity">
    <reaction evidence="1">
        <text>AMP + ATP = 2 ADP</text>
        <dbReference type="Rhea" id="RHEA:12973"/>
        <dbReference type="ChEBI" id="CHEBI:30616"/>
        <dbReference type="ChEBI" id="CHEBI:456215"/>
        <dbReference type="ChEBI" id="CHEBI:456216"/>
        <dbReference type="EC" id="2.7.4.3"/>
    </reaction>
</comment>
<comment type="pathway">
    <text evidence="1">Purine metabolism; AMP biosynthesis via salvage pathway; AMP from ADP: step 1/1.</text>
</comment>
<comment type="subunit">
    <text evidence="1">Monomer.</text>
</comment>
<comment type="subcellular location">
    <subcellularLocation>
        <location evidence="1">Cytoplasm</location>
    </subcellularLocation>
</comment>
<comment type="domain">
    <text evidence="1">Consists of three domains, a large central CORE domain and two small peripheral domains, NMPbind and LID, which undergo movements during catalysis. The LID domain closes over the site of phosphoryl transfer upon ATP binding. Assembling and dissambling the active center during each catalytic cycle provides an effective means to prevent ATP hydrolysis.</text>
</comment>
<comment type="similarity">
    <text evidence="1">Belongs to the adenylate kinase family.</text>
</comment>
<organism>
    <name type="scientific">Methylorubrum extorquens (strain PA1)</name>
    <name type="common">Methylobacterium extorquens</name>
    <dbReference type="NCBI Taxonomy" id="419610"/>
    <lineage>
        <taxon>Bacteria</taxon>
        <taxon>Pseudomonadati</taxon>
        <taxon>Pseudomonadota</taxon>
        <taxon>Alphaproteobacteria</taxon>
        <taxon>Hyphomicrobiales</taxon>
        <taxon>Methylobacteriaceae</taxon>
        <taxon>Methylorubrum</taxon>
    </lineage>
</organism>
<name>KAD_METEP</name>
<protein>
    <recommendedName>
        <fullName evidence="1">Adenylate kinase</fullName>
        <shortName evidence="1">AK</shortName>
        <ecNumber evidence="1">2.7.4.3</ecNumber>
    </recommendedName>
    <alternativeName>
        <fullName evidence="1">ATP-AMP transphosphorylase</fullName>
    </alternativeName>
    <alternativeName>
        <fullName evidence="1">ATP:AMP phosphotransferase</fullName>
    </alternativeName>
    <alternativeName>
        <fullName evidence="1">Adenylate monophosphate kinase</fullName>
    </alternativeName>
</protein>
<dbReference type="EC" id="2.7.4.3" evidence="1"/>
<dbReference type="EMBL" id="CP000908">
    <property type="protein sequence ID" value="ABY30575.1"/>
    <property type="molecule type" value="Genomic_DNA"/>
</dbReference>
<dbReference type="RefSeq" id="WP_003597122.1">
    <property type="nucleotide sequence ID" value="NC_010172.1"/>
</dbReference>
<dbReference type="SMR" id="A9W4R9"/>
<dbReference type="KEGG" id="mex:Mext_2180"/>
<dbReference type="eggNOG" id="COG0563">
    <property type="taxonomic scope" value="Bacteria"/>
</dbReference>
<dbReference type="HOGENOM" id="CLU_032354_1_2_5"/>
<dbReference type="BioCyc" id="MEXT419610:MEXT_RS11005-MONOMER"/>
<dbReference type="UniPathway" id="UPA00588">
    <property type="reaction ID" value="UER00649"/>
</dbReference>
<dbReference type="GO" id="GO:0005737">
    <property type="term" value="C:cytoplasm"/>
    <property type="evidence" value="ECO:0007669"/>
    <property type="project" value="UniProtKB-SubCell"/>
</dbReference>
<dbReference type="GO" id="GO:0004017">
    <property type="term" value="F:adenylate kinase activity"/>
    <property type="evidence" value="ECO:0007669"/>
    <property type="project" value="UniProtKB-UniRule"/>
</dbReference>
<dbReference type="GO" id="GO:0005524">
    <property type="term" value="F:ATP binding"/>
    <property type="evidence" value="ECO:0007669"/>
    <property type="project" value="UniProtKB-UniRule"/>
</dbReference>
<dbReference type="GO" id="GO:0044209">
    <property type="term" value="P:AMP salvage"/>
    <property type="evidence" value="ECO:0007669"/>
    <property type="project" value="UniProtKB-UniRule"/>
</dbReference>
<dbReference type="CDD" id="cd01428">
    <property type="entry name" value="ADK"/>
    <property type="match status" value="1"/>
</dbReference>
<dbReference type="Gene3D" id="3.40.50.300">
    <property type="entry name" value="P-loop containing nucleotide triphosphate hydrolases"/>
    <property type="match status" value="1"/>
</dbReference>
<dbReference type="HAMAP" id="MF_00235">
    <property type="entry name" value="Adenylate_kinase_Adk"/>
    <property type="match status" value="1"/>
</dbReference>
<dbReference type="InterPro" id="IPR006259">
    <property type="entry name" value="Adenyl_kin_sub"/>
</dbReference>
<dbReference type="InterPro" id="IPR000850">
    <property type="entry name" value="Adenylat/UMP-CMP_kin"/>
</dbReference>
<dbReference type="InterPro" id="IPR033690">
    <property type="entry name" value="Adenylat_kinase_CS"/>
</dbReference>
<dbReference type="InterPro" id="IPR027417">
    <property type="entry name" value="P-loop_NTPase"/>
</dbReference>
<dbReference type="NCBIfam" id="TIGR01351">
    <property type="entry name" value="adk"/>
    <property type="match status" value="1"/>
</dbReference>
<dbReference type="NCBIfam" id="NF001381">
    <property type="entry name" value="PRK00279.1-3"/>
    <property type="match status" value="1"/>
</dbReference>
<dbReference type="NCBIfam" id="NF011100">
    <property type="entry name" value="PRK14527.1"/>
    <property type="match status" value="1"/>
</dbReference>
<dbReference type="NCBIfam" id="NF011101">
    <property type="entry name" value="PRK14528.1"/>
    <property type="match status" value="1"/>
</dbReference>
<dbReference type="NCBIfam" id="NF011104">
    <property type="entry name" value="PRK14531.1"/>
    <property type="match status" value="1"/>
</dbReference>
<dbReference type="NCBIfam" id="NF011105">
    <property type="entry name" value="PRK14532.1"/>
    <property type="match status" value="1"/>
</dbReference>
<dbReference type="PANTHER" id="PTHR23359">
    <property type="entry name" value="NUCLEOTIDE KINASE"/>
    <property type="match status" value="1"/>
</dbReference>
<dbReference type="Pfam" id="PF00406">
    <property type="entry name" value="ADK"/>
    <property type="match status" value="1"/>
</dbReference>
<dbReference type="PRINTS" id="PR00094">
    <property type="entry name" value="ADENYLTKNASE"/>
</dbReference>
<dbReference type="SUPFAM" id="SSF52540">
    <property type="entry name" value="P-loop containing nucleoside triphosphate hydrolases"/>
    <property type="match status" value="1"/>
</dbReference>
<dbReference type="PROSITE" id="PS00113">
    <property type="entry name" value="ADENYLATE_KINASE"/>
    <property type="match status" value="1"/>
</dbReference>
<gene>
    <name evidence="1" type="primary">adk</name>
    <name type="ordered locus">Mext_2180</name>
</gene>
<feature type="chain" id="PRO_1000100582" description="Adenylate kinase">
    <location>
        <begin position="1"/>
        <end position="200"/>
    </location>
</feature>
<feature type="region of interest" description="NMP" evidence="1">
    <location>
        <begin position="30"/>
        <end position="59"/>
    </location>
</feature>
<feature type="region of interest" description="LID" evidence="1">
    <location>
        <begin position="126"/>
        <end position="142"/>
    </location>
</feature>
<feature type="binding site" evidence="1">
    <location>
        <begin position="10"/>
        <end position="15"/>
    </location>
    <ligand>
        <name>ATP</name>
        <dbReference type="ChEBI" id="CHEBI:30616"/>
    </ligand>
</feature>
<feature type="binding site" evidence="1">
    <location>
        <position position="31"/>
    </location>
    <ligand>
        <name>AMP</name>
        <dbReference type="ChEBI" id="CHEBI:456215"/>
    </ligand>
</feature>
<feature type="binding site" evidence="1">
    <location>
        <position position="36"/>
    </location>
    <ligand>
        <name>AMP</name>
        <dbReference type="ChEBI" id="CHEBI:456215"/>
    </ligand>
</feature>
<feature type="binding site" evidence="1">
    <location>
        <begin position="57"/>
        <end position="59"/>
    </location>
    <ligand>
        <name>AMP</name>
        <dbReference type="ChEBI" id="CHEBI:456215"/>
    </ligand>
</feature>
<feature type="binding site" evidence="1">
    <location>
        <begin position="85"/>
        <end position="88"/>
    </location>
    <ligand>
        <name>AMP</name>
        <dbReference type="ChEBI" id="CHEBI:456215"/>
    </ligand>
</feature>
<feature type="binding site" evidence="1">
    <location>
        <position position="92"/>
    </location>
    <ligand>
        <name>AMP</name>
        <dbReference type="ChEBI" id="CHEBI:456215"/>
    </ligand>
</feature>
<feature type="binding site" evidence="1">
    <location>
        <position position="127"/>
    </location>
    <ligand>
        <name>ATP</name>
        <dbReference type="ChEBI" id="CHEBI:30616"/>
    </ligand>
</feature>
<feature type="binding site" evidence="1">
    <location>
        <position position="139"/>
    </location>
    <ligand>
        <name>AMP</name>
        <dbReference type="ChEBI" id="CHEBI:456215"/>
    </ligand>
</feature>
<feature type="binding site" evidence="1">
    <location>
        <position position="150"/>
    </location>
    <ligand>
        <name>AMP</name>
        <dbReference type="ChEBI" id="CHEBI:456215"/>
    </ligand>
</feature>
<feature type="binding site" evidence="1">
    <location>
        <position position="178"/>
    </location>
    <ligand>
        <name>ATP</name>
        <dbReference type="ChEBI" id="CHEBI:30616"/>
    </ligand>
</feature>
<evidence type="ECO:0000255" key="1">
    <source>
        <dbReference type="HAMAP-Rule" id="MF_00235"/>
    </source>
</evidence>
<reference key="1">
    <citation type="submission" date="2007-12" db="EMBL/GenBank/DDBJ databases">
        <title>Complete sequence of Methylobacterium extorquens PA1.</title>
        <authorList>
            <consortium name="US DOE Joint Genome Institute"/>
            <person name="Copeland A."/>
            <person name="Lucas S."/>
            <person name="Lapidus A."/>
            <person name="Barry K."/>
            <person name="Glavina del Rio T."/>
            <person name="Dalin E."/>
            <person name="Tice H."/>
            <person name="Pitluck S."/>
            <person name="Saunders E."/>
            <person name="Brettin T."/>
            <person name="Bruce D."/>
            <person name="Detter J.C."/>
            <person name="Han C."/>
            <person name="Schmutz J."/>
            <person name="Larimer F."/>
            <person name="Land M."/>
            <person name="Hauser L."/>
            <person name="Kyrpides N."/>
            <person name="Kim E."/>
            <person name="Marx C."/>
            <person name="Richardson P."/>
        </authorList>
    </citation>
    <scope>NUCLEOTIDE SEQUENCE [LARGE SCALE GENOMIC DNA]</scope>
    <source>
        <strain>PA1</strain>
    </source>
</reference>
<proteinExistence type="inferred from homology"/>
<accession>A9W4R9</accession>
<keyword id="KW-0067">ATP-binding</keyword>
<keyword id="KW-0963">Cytoplasm</keyword>
<keyword id="KW-0418">Kinase</keyword>
<keyword id="KW-0545">Nucleotide biosynthesis</keyword>
<keyword id="KW-0547">Nucleotide-binding</keyword>
<keyword id="KW-0808">Transferase</keyword>